<keyword id="KW-0328">Glycosyltransferase</keyword>
<keyword id="KW-1185">Reference proteome</keyword>
<keyword id="KW-0804">Transcription</keyword>
<keyword id="KW-0805">Transcription regulation</keyword>
<keyword id="KW-0808">Transferase</keyword>
<dbReference type="EC" id="2.4.2.9" evidence="1"/>
<dbReference type="EMBL" id="AE016958">
    <property type="protein sequence ID" value="AAS03431.1"/>
    <property type="molecule type" value="Genomic_DNA"/>
</dbReference>
<dbReference type="RefSeq" id="WP_003872565.1">
    <property type="nucleotide sequence ID" value="NZ_CP106873.1"/>
</dbReference>
<dbReference type="SMR" id="Q741H6"/>
<dbReference type="STRING" id="262316.MAP_1114"/>
<dbReference type="KEGG" id="mpa:MAP_1114"/>
<dbReference type="PATRIC" id="fig|262316.17.peg.1173"/>
<dbReference type="eggNOG" id="COG2065">
    <property type="taxonomic scope" value="Bacteria"/>
</dbReference>
<dbReference type="HOGENOM" id="CLU_094234_2_1_11"/>
<dbReference type="Proteomes" id="UP000000580">
    <property type="component" value="Chromosome"/>
</dbReference>
<dbReference type="GO" id="GO:0004845">
    <property type="term" value="F:uracil phosphoribosyltransferase activity"/>
    <property type="evidence" value="ECO:0007669"/>
    <property type="project" value="UniProtKB-UniRule"/>
</dbReference>
<dbReference type="GO" id="GO:0006355">
    <property type="term" value="P:regulation of DNA-templated transcription"/>
    <property type="evidence" value="ECO:0007669"/>
    <property type="project" value="UniProtKB-UniRule"/>
</dbReference>
<dbReference type="CDD" id="cd06223">
    <property type="entry name" value="PRTases_typeI"/>
    <property type="match status" value="1"/>
</dbReference>
<dbReference type="FunFam" id="3.40.50.2020:FF:000020">
    <property type="entry name" value="Bifunctional protein PyrR"/>
    <property type="match status" value="1"/>
</dbReference>
<dbReference type="Gene3D" id="3.40.50.2020">
    <property type="match status" value="1"/>
</dbReference>
<dbReference type="HAMAP" id="MF_01219">
    <property type="entry name" value="PyrR"/>
    <property type="match status" value="1"/>
</dbReference>
<dbReference type="InterPro" id="IPR000836">
    <property type="entry name" value="PRibTrfase_dom"/>
</dbReference>
<dbReference type="InterPro" id="IPR029057">
    <property type="entry name" value="PRTase-like"/>
</dbReference>
<dbReference type="InterPro" id="IPR023050">
    <property type="entry name" value="PyrR"/>
</dbReference>
<dbReference type="InterPro" id="IPR050137">
    <property type="entry name" value="PyrR_bifunctional"/>
</dbReference>
<dbReference type="NCBIfam" id="NF003547">
    <property type="entry name" value="PRK05205.1-3"/>
    <property type="match status" value="1"/>
</dbReference>
<dbReference type="NCBIfam" id="NF003549">
    <property type="entry name" value="PRK05205.1-5"/>
    <property type="match status" value="1"/>
</dbReference>
<dbReference type="PANTHER" id="PTHR11608">
    <property type="entry name" value="BIFUNCTIONAL PROTEIN PYRR"/>
    <property type="match status" value="1"/>
</dbReference>
<dbReference type="PANTHER" id="PTHR11608:SF0">
    <property type="entry name" value="BIFUNCTIONAL PROTEIN PYRR"/>
    <property type="match status" value="1"/>
</dbReference>
<dbReference type="Pfam" id="PF00156">
    <property type="entry name" value="Pribosyltran"/>
    <property type="match status" value="1"/>
</dbReference>
<dbReference type="SUPFAM" id="SSF53271">
    <property type="entry name" value="PRTase-like"/>
    <property type="match status" value="1"/>
</dbReference>
<evidence type="ECO:0000255" key="1">
    <source>
        <dbReference type="HAMAP-Rule" id="MF_01219"/>
    </source>
</evidence>
<proteinExistence type="inferred from homology"/>
<sequence>MGAAGNTGSSGDSRELMSAADVGRTISRIAHQIIEKTALDGPDGPRVVLLGIPTRGVTLADRLARNIGEYSGVEVGHGALDITLYRDDLMQKPPRPLEATSIPAGGIDDALVILVDDVLYSGRSVRSALDALRDVGRPRVVQLAVLVDRGHRELPLRADYVGKNVPTSRSESVHVLLAEHDGADGVVISR</sequence>
<name>PYRR_MYCPA</name>
<comment type="function">
    <text evidence="1">Regulates the transcription of the pyrimidine nucleotide (pyr) operon in response to exogenous pyrimidines.</text>
</comment>
<comment type="function">
    <text evidence="1">Also displays a weak uracil phosphoribosyltransferase activity which is not physiologically significant.</text>
</comment>
<comment type="catalytic activity">
    <reaction evidence="1">
        <text>UMP + diphosphate = 5-phospho-alpha-D-ribose 1-diphosphate + uracil</text>
        <dbReference type="Rhea" id="RHEA:13017"/>
        <dbReference type="ChEBI" id="CHEBI:17568"/>
        <dbReference type="ChEBI" id="CHEBI:33019"/>
        <dbReference type="ChEBI" id="CHEBI:57865"/>
        <dbReference type="ChEBI" id="CHEBI:58017"/>
        <dbReference type="EC" id="2.4.2.9"/>
    </reaction>
</comment>
<comment type="similarity">
    <text evidence="1">Belongs to the purine/pyrimidine phosphoribosyltransferase family. PyrR subfamily.</text>
</comment>
<reference key="1">
    <citation type="journal article" date="2005" name="Proc. Natl. Acad. Sci. U.S.A.">
        <title>The complete genome sequence of Mycobacterium avium subspecies paratuberculosis.</title>
        <authorList>
            <person name="Li L."/>
            <person name="Bannantine J.P."/>
            <person name="Zhang Q."/>
            <person name="Amonsin A."/>
            <person name="May B.J."/>
            <person name="Alt D."/>
            <person name="Banerji N."/>
            <person name="Kanjilal S."/>
            <person name="Kapur V."/>
        </authorList>
    </citation>
    <scope>NUCLEOTIDE SEQUENCE [LARGE SCALE GENOMIC DNA]</scope>
    <source>
        <strain>ATCC BAA-968 / K-10</strain>
    </source>
</reference>
<organism>
    <name type="scientific">Mycolicibacterium paratuberculosis (strain ATCC BAA-968 / K-10)</name>
    <name type="common">Mycobacterium paratuberculosis</name>
    <dbReference type="NCBI Taxonomy" id="262316"/>
    <lineage>
        <taxon>Bacteria</taxon>
        <taxon>Bacillati</taxon>
        <taxon>Actinomycetota</taxon>
        <taxon>Actinomycetes</taxon>
        <taxon>Mycobacteriales</taxon>
        <taxon>Mycobacteriaceae</taxon>
        <taxon>Mycobacterium</taxon>
        <taxon>Mycobacterium avium complex (MAC)</taxon>
    </lineage>
</organism>
<gene>
    <name evidence="1" type="primary">pyrR</name>
    <name type="ordered locus">MAP_1114</name>
</gene>
<feature type="chain" id="PRO_1000053849" description="Bifunctional protein PyrR">
    <location>
        <begin position="1"/>
        <end position="190"/>
    </location>
</feature>
<feature type="short sequence motif" description="PRPP-binding" evidence="1">
    <location>
        <begin position="112"/>
        <end position="124"/>
    </location>
</feature>
<accession>Q741H6</accession>
<protein>
    <recommendedName>
        <fullName evidence="1">Bifunctional protein PyrR</fullName>
    </recommendedName>
    <domain>
        <recommendedName>
            <fullName evidence="1">Pyrimidine operon regulatory protein</fullName>
        </recommendedName>
    </domain>
    <domain>
        <recommendedName>
            <fullName evidence="1">Uracil phosphoribosyltransferase</fullName>
            <shortName evidence="1">UPRTase</shortName>
            <ecNumber evidence="1">2.4.2.9</ecNumber>
        </recommendedName>
    </domain>
</protein>